<accession>Q7U8W7</accession>
<gene>
    <name evidence="1" type="primary">atpF</name>
    <name type="ordered locus">SYNW0492</name>
</gene>
<feature type="chain" id="PRO_0000368833" description="ATP synthase subunit b">
    <location>
        <begin position="1"/>
        <end position="160"/>
    </location>
</feature>
<feature type="transmembrane region" description="Helical" evidence="1">
    <location>
        <begin position="13"/>
        <end position="33"/>
    </location>
</feature>
<comment type="function">
    <text evidence="1">F(1)F(0) ATP synthase produces ATP from ADP in the presence of a proton or sodium gradient. F-type ATPases consist of two structural domains, F(1) containing the extramembraneous catalytic core and F(0) containing the membrane proton channel, linked together by a central stalk and a peripheral stalk. During catalysis, ATP synthesis in the catalytic domain of F(1) is coupled via a rotary mechanism of the central stalk subunits to proton translocation.</text>
</comment>
<comment type="function">
    <text evidence="1">Component of the F(0) channel, it forms part of the peripheral stalk, linking F(1) to F(0).</text>
</comment>
<comment type="subunit">
    <text evidence="1">F-type ATPases have 2 components, F(1) - the catalytic core - and F(0) - the membrane proton channel. F(1) has five subunits: alpha(3), beta(3), gamma(1), delta(1), epsilon(1). F(0) has four main subunits: a(1), b(1), b'(1) and c(10-14). The alpha and beta chains form an alternating ring which encloses part of the gamma chain. F(1) is attached to F(0) by a central stalk formed by the gamma and epsilon chains, while a peripheral stalk is formed by the delta, b and b' chains.</text>
</comment>
<comment type="subcellular location">
    <subcellularLocation>
        <location evidence="1">Cellular thylakoid membrane</location>
        <topology evidence="1">Single-pass membrane protein</topology>
    </subcellularLocation>
</comment>
<comment type="similarity">
    <text evidence="1">Belongs to the ATPase B chain family.</text>
</comment>
<sequence>MTLNFNPLETNLVNLAIVIGVLVWFLRGFLGGILDRRRQAILQELQDAETRLKTATEELSKAQSDLAAAQQKADKIRVDGEARAAAIRSDGEQRTIAAMAAVKQGAAADADAEAARIKDILRREAALAAIDKVLSDLPSRLDDQAQARLIDSTITNLENA</sequence>
<organism>
    <name type="scientific">Parasynechococcus marenigrum (strain WH8102)</name>
    <dbReference type="NCBI Taxonomy" id="84588"/>
    <lineage>
        <taxon>Bacteria</taxon>
        <taxon>Bacillati</taxon>
        <taxon>Cyanobacteriota</taxon>
        <taxon>Cyanophyceae</taxon>
        <taxon>Synechococcales</taxon>
        <taxon>Prochlorococcaceae</taxon>
        <taxon>Parasynechococcus</taxon>
        <taxon>Parasynechococcus marenigrum</taxon>
    </lineage>
</organism>
<protein>
    <recommendedName>
        <fullName evidence="1">ATP synthase subunit b</fullName>
    </recommendedName>
    <alternativeName>
        <fullName evidence="1">ATP synthase F(0) sector subunit b</fullName>
    </alternativeName>
    <alternativeName>
        <fullName evidence="1">ATPase subunit I</fullName>
    </alternativeName>
    <alternativeName>
        <fullName evidence="1">F-type ATPase subunit b</fullName>
        <shortName evidence="1">F-ATPase subunit b</shortName>
    </alternativeName>
</protein>
<dbReference type="EMBL" id="BX569690">
    <property type="protein sequence ID" value="CAE07007.1"/>
    <property type="molecule type" value="Genomic_DNA"/>
</dbReference>
<dbReference type="RefSeq" id="WP_011127363.1">
    <property type="nucleotide sequence ID" value="NC_005070.1"/>
</dbReference>
<dbReference type="SMR" id="Q7U8W7"/>
<dbReference type="STRING" id="84588.SYNW0492"/>
<dbReference type="KEGG" id="syw:SYNW0492"/>
<dbReference type="eggNOG" id="COG0711">
    <property type="taxonomic scope" value="Bacteria"/>
</dbReference>
<dbReference type="HOGENOM" id="CLU_079215_8_1_3"/>
<dbReference type="Proteomes" id="UP000001422">
    <property type="component" value="Chromosome"/>
</dbReference>
<dbReference type="GO" id="GO:0031676">
    <property type="term" value="C:plasma membrane-derived thylakoid membrane"/>
    <property type="evidence" value="ECO:0007669"/>
    <property type="project" value="UniProtKB-SubCell"/>
</dbReference>
<dbReference type="GO" id="GO:0045259">
    <property type="term" value="C:proton-transporting ATP synthase complex"/>
    <property type="evidence" value="ECO:0007669"/>
    <property type="project" value="UniProtKB-KW"/>
</dbReference>
<dbReference type="GO" id="GO:0046933">
    <property type="term" value="F:proton-transporting ATP synthase activity, rotational mechanism"/>
    <property type="evidence" value="ECO:0007669"/>
    <property type="project" value="UniProtKB-UniRule"/>
</dbReference>
<dbReference type="CDD" id="cd06503">
    <property type="entry name" value="ATP-synt_Fo_b"/>
    <property type="match status" value="1"/>
</dbReference>
<dbReference type="HAMAP" id="MF_01398">
    <property type="entry name" value="ATP_synth_b_bprime"/>
    <property type="match status" value="1"/>
</dbReference>
<dbReference type="InterPro" id="IPR002146">
    <property type="entry name" value="ATP_synth_b/b'su_bac/chlpt"/>
</dbReference>
<dbReference type="NCBIfam" id="NF005606">
    <property type="entry name" value="PRK07352.1"/>
    <property type="match status" value="1"/>
</dbReference>
<dbReference type="PANTHER" id="PTHR34264">
    <property type="entry name" value="ATP SYNTHASE SUBUNIT B, CHLOROPLASTIC"/>
    <property type="match status" value="1"/>
</dbReference>
<dbReference type="PANTHER" id="PTHR34264:SF3">
    <property type="entry name" value="ATP SYNTHASE SUBUNIT B, CHLOROPLASTIC"/>
    <property type="match status" value="1"/>
</dbReference>
<dbReference type="Pfam" id="PF00430">
    <property type="entry name" value="ATP-synt_B"/>
    <property type="match status" value="1"/>
</dbReference>
<reference key="1">
    <citation type="journal article" date="2003" name="Nature">
        <title>The genome of a motile marine Synechococcus.</title>
        <authorList>
            <person name="Palenik B."/>
            <person name="Brahamsha B."/>
            <person name="Larimer F.W."/>
            <person name="Land M.L."/>
            <person name="Hauser L."/>
            <person name="Chain P."/>
            <person name="Lamerdin J.E."/>
            <person name="Regala W."/>
            <person name="Allen E.E."/>
            <person name="McCarren J."/>
            <person name="Paulsen I.T."/>
            <person name="Dufresne A."/>
            <person name="Partensky F."/>
            <person name="Webb E.A."/>
            <person name="Waterbury J."/>
        </authorList>
    </citation>
    <scope>NUCLEOTIDE SEQUENCE [LARGE SCALE GENOMIC DNA]</scope>
    <source>
        <strain>WH8102</strain>
    </source>
</reference>
<name>ATPF_PARMW</name>
<keyword id="KW-0066">ATP synthesis</keyword>
<keyword id="KW-0138">CF(0)</keyword>
<keyword id="KW-0375">Hydrogen ion transport</keyword>
<keyword id="KW-0406">Ion transport</keyword>
<keyword id="KW-0472">Membrane</keyword>
<keyword id="KW-0793">Thylakoid</keyword>
<keyword id="KW-0812">Transmembrane</keyword>
<keyword id="KW-1133">Transmembrane helix</keyword>
<keyword id="KW-0813">Transport</keyword>
<proteinExistence type="inferred from homology"/>
<evidence type="ECO:0000255" key="1">
    <source>
        <dbReference type="HAMAP-Rule" id="MF_01398"/>
    </source>
</evidence>